<sequence length="48" mass="5550">MAERKGSISGLTDDEAQEFHKFWVQGFVGFTAVAVVAHFLVWVWRPWL</sequence>
<feature type="initiator methionine" description="Removed" evidence="3">
    <location>
        <position position="1"/>
    </location>
</feature>
<feature type="chain" id="PRO_0000099824" description="Light-harvesting protein B-870 beta chain">
    <location>
        <begin position="2"/>
        <end position="48"/>
    </location>
</feature>
<feature type="topological domain" description="Cytoplasmic" evidence="2">
    <location>
        <begin position="2"/>
        <end position="21"/>
    </location>
</feature>
<feature type="transmembrane region" description="Helical" evidence="2">
    <location>
        <begin position="22"/>
        <end position="44"/>
    </location>
</feature>
<feature type="topological domain" description="Periplasmic" evidence="2">
    <location>
        <begin position="45"/>
        <end position="48"/>
    </location>
</feature>
<feature type="binding site" description="axial binding residue" evidence="2">
    <location>
        <position position="20"/>
    </location>
    <ligand>
        <name>a bacteriochlorophyll</name>
        <dbReference type="ChEBI" id="CHEBI:38201"/>
    </ligand>
    <ligandPart>
        <name>Mg</name>
        <dbReference type="ChEBI" id="CHEBI:25107"/>
    </ligandPart>
</feature>
<feature type="binding site" description="axial binding residue" evidence="2">
    <location>
        <position position="38"/>
    </location>
    <ligand>
        <name>a bacteriochlorophyll</name>
        <dbReference type="ChEBI" id="CHEBI:38201"/>
    </ligand>
    <ligandPart>
        <name>Mg</name>
        <dbReference type="ChEBI" id="CHEBI:25107"/>
    </ligandPart>
</feature>
<organism>
    <name type="scientific">Rubrivivax gelatinosus</name>
    <name type="common">Rhodocyclus gelatinosus</name>
    <name type="synonym">Rhodopseudomonas gelatinosa</name>
    <dbReference type="NCBI Taxonomy" id="28068"/>
    <lineage>
        <taxon>Bacteria</taxon>
        <taxon>Pseudomonadati</taxon>
        <taxon>Pseudomonadota</taxon>
        <taxon>Betaproteobacteria</taxon>
        <taxon>Burkholderiales</taxon>
        <taxon>Sphaerotilaceae</taxon>
        <taxon>Rubrivivax</taxon>
    </lineage>
</organism>
<dbReference type="EMBL" id="AH012710">
    <property type="protein sequence ID" value="AAO93119.1"/>
    <property type="molecule type" value="Genomic_DNA"/>
</dbReference>
<dbReference type="PIR" id="B49964">
    <property type="entry name" value="B49964"/>
</dbReference>
<dbReference type="RefSeq" id="WP_009857107.1">
    <property type="nucleotide sequence ID" value="NZ_SLXD01000003.1"/>
</dbReference>
<dbReference type="SMR" id="P0DJO1"/>
<dbReference type="GeneID" id="98608125"/>
<dbReference type="OrthoDB" id="5739887at2"/>
<dbReference type="GO" id="GO:0005886">
    <property type="term" value="C:plasma membrane"/>
    <property type="evidence" value="ECO:0007669"/>
    <property type="project" value="UniProtKB-SubCell"/>
</dbReference>
<dbReference type="GO" id="GO:0030077">
    <property type="term" value="C:plasma membrane light-harvesting complex"/>
    <property type="evidence" value="ECO:0007669"/>
    <property type="project" value="InterPro"/>
</dbReference>
<dbReference type="GO" id="GO:0042314">
    <property type="term" value="F:bacteriochlorophyll binding"/>
    <property type="evidence" value="ECO:0007669"/>
    <property type="project" value="UniProtKB-KW"/>
</dbReference>
<dbReference type="GO" id="GO:0045156">
    <property type="term" value="F:electron transporter, transferring electrons within the cyclic electron transport pathway of photosynthesis activity"/>
    <property type="evidence" value="ECO:0007669"/>
    <property type="project" value="InterPro"/>
</dbReference>
<dbReference type="GO" id="GO:0046872">
    <property type="term" value="F:metal ion binding"/>
    <property type="evidence" value="ECO:0007669"/>
    <property type="project" value="UniProtKB-KW"/>
</dbReference>
<dbReference type="GO" id="GO:0019684">
    <property type="term" value="P:photosynthesis, light reaction"/>
    <property type="evidence" value="ECO:0007669"/>
    <property type="project" value="InterPro"/>
</dbReference>
<dbReference type="Gene3D" id="1.20.5.250">
    <property type="match status" value="1"/>
</dbReference>
<dbReference type="InterPro" id="IPR000066">
    <property type="entry name" value="Antenna_a/b"/>
</dbReference>
<dbReference type="InterPro" id="IPR023623">
    <property type="entry name" value="Antenna_beta_CS"/>
</dbReference>
<dbReference type="InterPro" id="IPR023624">
    <property type="entry name" value="Antenna_beta_dom_sf"/>
</dbReference>
<dbReference type="InterPro" id="IPR002362">
    <property type="entry name" value="LHB-1/5"/>
</dbReference>
<dbReference type="InterPro" id="IPR035889">
    <property type="entry name" value="Light-harvesting_complex"/>
</dbReference>
<dbReference type="NCBIfam" id="NF040862">
    <property type="entry name" value="pufB_517_ASD"/>
    <property type="match status" value="1"/>
</dbReference>
<dbReference type="Pfam" id="PF00556">
    <property type="entry name" value="LHC"/>
    <property type="match status" value="1"/>
</dbReference>
<dbReference type="PIRSF" id="PIRSF002900">
    <property type="entry name" value="Antenna_beta"/>
    <property type="match status" value="1"/>
</dbReference>
<dbReference type="PRINTS" id="PR00674">
    <property type="entry name" value="LIGHTHARVSTB"/>
</dbReference>
<dbReference type="SUPFAM" id="SSF56918">
    <property type="entry name" value="Light-harvesting complex subunits"/>
    <property type="match status" value="1"/>
</dbReference>
<dbReference type="PROSITE" id="PS00969">
    <property type="entry name" value="ANTENNA_COMP_BETA"/>
    <property type="match status" value="1"/>
</dbReference>
<gene>
    <name type="primary">pufB</name>
</gene>
<protein>
    <recommendedName>
        <fullName>Light-harvesting protein B-870 beta chain</fullName>
    </recommendedName>
    <alternativeName>
        <fullName>Antenna pigment protein beta chain</fullName>
    </alternativeName>
    <alternativeName>
        <fullName>Light-harvesting protein B-875 beta chain</fullName>
    </alternativeName>
</protein>
<comment type="function">
    <text>Antenna complexes are light-harvesting systems, which transfer the excitation energy to the reaction centers.</text>
</comment>
<comment type="subunit">
    <text evidence="1">An alpha/beta heterodimer. The core complex is formed by different alpha and beta chains, binding bacteriochlorophyll molecules, and arranged most probably in tetrameric structures disposed around the reaction center. The non-pigmented gamma chains may constitute additional components (By similarity).</text>
</comment>
<comment type="subcellular location">
    <subcellularLocation>
        <location>Cell inner membrane</location>
        <topology>Single-pass type II membrane protein</topology>
    </subcellularLocation>
</comment>
<comment type="mass spectrometry" mass="5421.0" method="Electrospray" evidence="3"/>
<comment type="similarity">
    <text evidence="4">Belongs to the antenna complex beta subunit family.</text>
</comment>
<evidence type="ECO:0000250" key="1"/>
<evidence type="ECO:0000255" key="2"/>
<evidence type="ECO:0000269" key="3">
    <source>
    </source>
</evidence>
<evidence type="ECO:0000305" key="4"/>
<name>LHB1_RUBGE</name>
<accession>P0DJO1</accession>
<accession>P51757</accession>
<reference key="1">
    <citation type="journal article" date="1996" name="Mol. Gen. Genet.">
        <title>Development of gene transfer methods for Rubrivivax gelatinosus S1: construction, characterization and complementation of a puf operon deletion strain.</title>
        <authorList>
            <person name="Ouchane S."/>
            <person name="Picaud M."/>
            <person name="Reiss-Husson F."/>
            <person name="Vernotte C."/>
            <person name="Astier C."/>
        </authorList>
    </citation>
    <scope>NUCLEOTIDE SEQUENCE [GENOMIC DNA]</scope>
    <source>
        <strain>S1</strain>
    </source>
</reference>
<reference key="2">
    <citation type="journal article" date="1994" name="Eur. J. Biochem.">
        <title>Structural and spectral characterisation of the antenna complexes of Rhodocyclus gelatinosus. Indications of a hairpin-like-arranged antenna apoprotein with an unusually high alanine content.</title>
        <authorList>
            <person name="Brunisholz R.A."/>
            <person name="Suter F."/>
            <person name="Zuber H."/>
        </authorList>
    </citation>
    <scope>PROTEIN SEQUENCE OF 2-48</scope>
    <scope>SUBUNIT STRUCTURE</scope>
    <scope>MASS SPECTROMETRY</scope>
    <source>
        <strain>DSM 149 / LMG 4308 / 2150</strain>
        <strain>DSM 151 / LMG 4306 / Dr 2</strain>
    </source>
</reference>
<keyword id="KW-0042">Antenna complex</keyword>
<keyword id="KW-0076">Bacteriochlorophyll</keyword>
<keyword id="KW-0997">Cell inner membrane</keyword>
<keyword id="KW-1003">Cell membrane</keyword>
<keyword id="KW-0148">Chlorophyll</keyword>
<keyword id="KW-0157">Chromophore</keyword>
<keyword id="KW-0903">Direct protein sequencing</keyword>
<keyword id="KW-0437">Light-harvesting polypeptide</keyword>
<keyword id="KW-0460">Magnesium</keyword>
<keyword id="KW-0472">Membrane</keyword>
<keyword id="KW-0479">Metal-binding</keyword>
<keyword id="KW-0812">Transmembrane</keyword>
<keyword id="KW-1133">Transmembrane helix</keyword>
<proteinExistence type="evidence at protein level"/>